<sequence length="57" mass="6036">MLKWAIIFAIISFISGVFGFRSTSAGTASIAKFLFFLFALITLVLLVLGLLGIGVVA</sequence>
<comment type="subcellular location">
    <subcellularLocation>
        <location evidence="1">Cell membrane</location>
        <topology evidence="1">Multi-pass membrane protein</topology>
    </subcellularLocation>
</comment>
<comment type="similarity">
    <text evidence="1">Belongs to the UPF0391 family.</text>
</comment>
<comment type="sequence caution" evidence="2">
    <conflict type="erroneous initiation">
        <sequence resource="EMBL-CDS" id="CAD84041"/>
    </conflict>
</comment>
<proteinExistence type="inferred from homology"/>
<feature type="chain" id="PRO_0000256754" description="UPF0391 membrane protein NE0130">
    <location>
        <begin position="1"/>
        <end position="57"/>
    </location>
</feature>
<feature type="transmembrane region" description="Helical" evidence="1">
    <location>
        <begin position="1"/>
        <end position="21"/>
    </location>
</feature>
<feature type="transmembrane region" description="Helical" evidence="1">
    <location>
        <begin position="33"/>
        <end position="53"/>
    </location>
</feature>
<dbReference type="EMBL" id="AL954747">
    <property type="protein sequence ID" value="CAD84041.1"/>
    <property type="status" value="ALT_INIT"/>
    <property type="molecule type" value="Genomic_DNA"/>
</dbReference>
<dbReference type="RefSeq" id="WP_041356921.1">
    <property type="nucleotide sequence ID" value="NC_004757.1"/>
</dbReference>
<dbReference type="SMR" id="Q82XW5"/>
<dbReference type="STRING" id="228410.NE0130"/>
<dbReference type="KEGG" id="neu:NE0130"/>
<dbReference type="HOGENOM" id="CLU_2437811_0_0_4"/>
<dbReference type="Proteomes" id="UP000001416">
    <property type="component" value="Chromosome"/>
</dbReference>
<dbReference type="GO" id="GO:0005886">
    <property type="term" value="C:plasma membrane"/>
    <property type="evidence" value="ECO:0007669"/>
    <property type="project" value="UniProtKB-SubCell"/>
</dbReference>
<dbReference type="HAMAP" id="MF_01361">
    <property type="entry name" value="UPF0391"/>
    <property type="match status" value="1"/>
</dbReference>
<dbReference type="InterPro" id="IPR009760">
    <property type="entry name" value="DUF1328"/>
</dbReference>
<dbReference type="Pfam" id="PF07043">
    <property type="entry name" value="DUF1328"/>
    <property type="match status" value="1"/>
</dbReference>
<dbReference type="PIRSF" id="PIRSF036466">
    <property type="entry name" value="UCP036466"/>
    <property type="match status" value="1"/>
</dbReference>
<accession>Q82XW5</accession>
<keyword id="KW-1003">Cell membrane</keyword>
<keyword id="KW-0472">Membrane</keyword>
<keyword id="KW-1185">Reference proteome</keyword>
<keyword id="KW-0812">Transmembrane</keyword>
<keyword id="KW-1133">Transmembrane helix</keyword>
<evidence type="ECO:0000255" key="1">
    <source>
        <dbReference type="HAMAP-Rule" id="MF_01361"/>
    </source>
</evidence>
<evidence type="ECO:0000305" key="2"/>
<name>Y130_NITEU</name>
<protein>
    <recommendedName>
        <fullName evidence="1">UPF0391 membrane protein NE0130</fullName>
    </recommendedName>
</protein>
<reference key="1">
    <citation type="journal article" date="2003" name="J. Bacteriol.">
        <title>Complete genome sequence of the ammonia-oxidizing bacterium and obligate chemolithoautotroph Nitrosomonas europaea.</title>
        <authorList>
            <person name="Chain P."/>
            <person name="Lamerdin J.E."/>
            <person name="Larimer F.W."/>
            <person name="Regala W."/>
            <person name="Lao V."/>
            <person name="Land M.L."/>
            <person name="Hauser L."/>
            <person name="Hooper A.B."/>
            <person name="Klotz M.G."/>
            <person name="Norton J."/>
            <person name="Sayavedra-Soto L.A."/>
            <person name="Arciero D.M."/>
            <person name="Hommes N.G."/>
            <person name="Whittaker M.M."/>
            <person name="Arp D.J."/>
        </authorList>
    </citation>
    <scope>NUCLEOTIDE SEQUENCE [LARGE SCALE GENOMIC DNA]</scope>
    <source>
        <strain>ATCC 19718 / CIP 103999 / KCTC 2705 / NBRC 14298</strain>
    </source>
</reference>
<organism>
    <name type="scientific">Nitrosomonas europaea (strain ATCC 19718 / CIP 103999 / KCTC 2705 / NBRC 14298)</name>
    <dbReference type="NCBI Taxonomy" id="228410"/>
    <lineage>
        <taxon>Bacteria</taxon>
        <taxon>Pseudomonadati</taxon>
        <taxon>Pseudomonadota</taxon>
        <taxon>Betaproteobacteria</taxon>
        <taxon>Nitrosomonadales</taxon>
        <taxon>Nitrosomonadaceae</taxon>
        <taxon>Nitrosomonas</taxon>
    </lineage>
</organism>
<gene>
    <name type="ordered locus">NE0130</name>
</gene>